<accession>Q8ZJY9</accession>
<proteinExistence type="inferred from homology"/>
<organism>
    <name type="scientific">Salmonella typhimurium (strain LT2 / SGSC1412 / ATCC 700720)</name>
    <dbReference type="NCBI Taxonomy" id="99287"/>
    <lineage>
        <taxon>Bacteria</taxon>
        <taxon>Pseudomonadati</taxon>
        <taxon>Pseudomonadota</taxon>
        <taxon>Gammaproteobacteria</taxon>
        <taxon>Enterobacterales</taxon>
        <taxon>Enterobacteriaceae</taxon>
        <taxon>Salmonella</taxon>
    </lineage>
</organism>
<dbReference type="EC" id="3.1.-.-" evidence="1"/>
<dbReference type="EMBL" id="AE006468">
    <property type="protein sequence ID" value="AAL23341.1"/>
    <property type="molecule type" value="Genomic_DNA"/>
</dbReference>
<dbReference type="RefSeq" id="WP_001520547.1">
    <property type="nucleotide sequence ID" value="NC_003197.2"/>
</dbReference>
<dbReference type="STRING" id="99287.STM4523"/>
<dbReference type="PaxDb" id="99287-STM4523"/>
<dbReference type="DNASU" id="1256049"/>
<dbReference type="KEGG" id="stm:STM4523"/>
<dbReference type="PATRIC" id="fig|99287.12.peg.4766"/>
<dbReference type="HOGENOM" id="CLU_151239_0_0_6"/>
<dbReference type="OMA" id="MRQHTRT"/>
<dbReference type="PhylomeDB" id="Q8ZJY9"/>
<dbReference type="BioCyc" id="SENT99287:STM4523-MONOMER"/>
<dbReference type="Proteomes" id="UP000001014">
    <property type="component" value="Chromosome"/>
</dbReference>
<dbReference type="GO" id="GO:0005737">
    <property type="term" value="C:cytoplasm"/>
    <property type="evidence" value="ECO:0007669"/>
    <property type="project" value="UniProtKB-SubCell"/>
</dbReference>
<dbReference type="GO" id="GO:0003677">
    <property type="term" value="F:DNA binding"/>
    <property type="evidence" value="ECO:0007669"/>
    <property type="project" value="UniProtKB-KW"/>
</dbReference>
<dbReference type="GO" id="GO:0003723">
    <property type="term" value="F:RNA binding"/>
    <property type="evidence" value="ECO:0007669"/>
    <property type="project" value="UniProtKB-KW"/>
</dbReference>
<dbReference type="GO" id="GO:0004521">
    <property type="term" value="F:RNA endonuclease activity"/>
    <property type="evidence" value="ECO:0007669"/>
    <property type="project" value="UniProtKB-UniRule"/>
</dbReference>
<dbReference type="GO" id="GO:0016070">
    <property type="term" value="P:RNA metabolic process"/>
    <property type="evidence" value="ECO:0007669"/>
    <property type="project" value="InterPro"/>
</dbReference>
<dbReference type="HAMAP" id="MF_01193">
    <property type="entry name" value="Endoribonucl_SymE"/>
    <property type="match status" value="1"/>
</dbReference>
<dbReference type="InterPro" id="IPR007159">
    <property type="entry name" value="SpoVT-AbrB_dom"/>
</dbReference>
<dbReference type="InterPro" id="IPR014944">
    <property type="entry name" value="Toxin_SymE-like"/>
</dbReference>
<dbReference type="InterPro" id="IPR020883">
    <property type="entry name" value="TypeI_TA_SymE"/>
</dbReference>
<dbReference type="NCBIfam" id="NF010128">
    <property type="entry name" value="PRK13605.1"/>
    <property type="match status" value="1"/>
</dbReference>
<dbReference type="Pfam" id="PF08845">
    <property type="entry name" value="SymE_toxin"/>
    <property type="match status" value="1"/>
</dbReference>
<dbReference type="PROSITE" id="PS51740">
    <property type="entry name" value="SPOVT_ABRB"/>
    <property type="match status" value="1"/>
</dbReference>
<reference key="1">
    <citation type="journal article" date="2001" name="Nature">
        <title>Complete genome sequence of Salmonella enterica serovar Typhimurium LT2.</title>
        <authorList>
            <person name="McClelland M."/>
            <person name="Sanderson K.E."/>
            <person name="Spieth J."/>
            <person name="Clifton S.W."/>
            <person name="Latreille P."/>
            <person name="Courtney L."/>
            <person name="Porwollik S."/>
            <person name="Ali J."/>
            <person name="Dante M."/>
            <person name="Du F."/>
            <person name="Hou S."/>
            <person name="Layman D."/>
            <person name="Leonard S."/>
            <person name="Nguyen C."/>
            <person name="Scott K."/>
            <person name="Holmes A."/>
            <person name="Grewal N."/>
            <person name="Mulvaney E."/>
            <person name="Ryan E."/>
            <person name="Sun H."/>
            <person name="Florea L."/>
            <person name="Miller W."/>
            <person name="Stoneking T."/>
            <person name="Nhan M."/>
            <person name="Waterston R."/>
            <person name="Wilson R.K."/>
        </authorList>
    </citation>
    <scope>NUCLEOTIDE SEQUENCE [LARGE SCALE GENOMIC DNA]</scope>
    <source>
        <strain>LT2 / SGSC1412 / ATCC 700720</strain>
    </source>
</reference>
<keyword id="KW-0963">Cytoplasm</keyword>
<keyword id="KW-0238">DNA-binding</keyword>
<keyword id="KW-0255">Endonuclease</keyword>
<keyword id="KW-0378">Hydrolase</keyword>
<keyword id="KW-0540">Nuclease</keyword>
<keyword id="KW-1185">Reference proteome</keyword>
<keyword id="KW-0694">RNA-binding</keyword>
<sequence length="110" mass="12154">MTTVHSIADPCDPEVSPTNNRHLTVSYASRYPDYTRIPALTMKGQWLEAAGFATGTEVDVRVMNGCIVLTAQQPQPEESELMQSLRQVSKLSARKQKQVQAFIDVMAGSK</sequence>
<evidence type="ECO:0000255" key="1">
    <source>
        <dbReference type="HAMAP-Rule" id="MF_01193"/>
    </source>
</evidence>
<evidence type="ECO:0000255" key="2">
    <source>
        <dbReference type="PROSITE-ProRule" id="PRU01076"/>
    </source>
</evidence>
<gene>
    <name evidence="1" type="primary">symE</name>
    <name type="ordered locus">STM4523</name>
</gene>
<comment type="function">
    <text evidence="1">Involved in the degradation and recycling of damaged RNA. It is itself a target for degradation by the ATP-dependent protease Lon.</text>
</comment>
<comment type="subcellular location">
    <subcellularLocation>
        <location evidence="1">Cytoplasm</location>
    </subcellularLocation>
</comment>
<comment type="similarity">
    <text evidence="1">Belongs to the SymE family.</text>
</comment>
<feature type="chain" id="PRO_0000297826" description="Endoribonuclease SymE">
    <location>
        <begin position="1"/>
        <end position="110"/>
    </location>
</feature>
<feature type="domain" description="SpoVT-AbrB" evidence="2">
    <location>
        <begin position="29"/>
        <end position="74"/>
    </location>
</feature>
<protein>
    <recommendedName>
        <fullName evidence="1">Endoribonuclease SymE</fullName>
        <ecNumber evidence="1">3.1.-.-</ecNumber>
    </recommendedName>
</protein>
<name>SYME_SALTY</name>